<organism>
    <name type="scientific">Verminephrobacter eiseniae (strain EF01-2)</name>
    <dbReference type="NCBI Taxonomy" id="391735"/>
    <lineage>
        <taxon>Bacteria</taxon>
        <taxon>Pseudomonadati</taxon>
        <taxon>Pseudomonadota</taxon>
        <taxon>Betaproteobacteria</taxon>
        <taxon>Burkholderiales</taxon>
        <taxon>Comamonadaceae</taxon>
        <taxon>Verminephrobacter</taxon>
    </lineage>
</organism>
<protein>
    <recommendedName>
        <fullName evidence="1">Elongation factor Ts</fullName>
        <shortName evidence="1">EF-Ts</shortName>
    </recommendedName>
</protein>
<name>EFTS_VEREI</name>
<evidence type="ECO:0000255" key="1">
    <source>
        <dbReference type="HAMAP-Rule" id="MF_00050"/>
    </source>
</evidence>
<feature type="chain" id="PRO_1000006202" description="Elongation factor Ts">
    <location>
        <begin position="1"/>
        <end position="308"/>
    </location>
</feature>
<feature type="region of interest" description="Involved in Mg(2+) ion dislocation from EF-Tu" evidence="1">
    <location>
        <begin position="80"/>
        <end position="83"/>
    </location>
</feature>
<gene>
    <name evidence="1" type="primary">tsf</name>
    <name type="ordered locus">Veis_1439</name>
</gene>
<dbReference type="EMBL" id="CP000542">
    <property type="protein sequence ID" value="ABM57200.1"/>
    <property type="molecule type" value="Genomic_DNA"/>
</dbReference>
<dbReference type="RefSeq" id="WP_011809207.1">
    <property type="nucleotide sequence ID" value="NC_008786.1"/>
</dbReference>
<dbReference type="SMR" id="A1WHU3"/>
<dbReference type="STRING" id="391735.Veis_1439"/>
<dbReference type="GeneID" id="76460064"/>
<dbReference type="KEGG" id="vei:Veis_1439"/>
<dbReference type="eggNOG" id="COG0264">
    <property type="taxonomic scope" value="Bacteria"/>
</dbReference>
<dbReference type="HOGENOM" id="CLU_047155_0_2_4"/>
<dbReference type="OrthoDB" id="9808348at2"/>
<dbReference type="Proteomes" id="UP000000374">
    <property type="component" value="Chromosome"/>
</dbReference>
<dbReference type="GO" id="GO:0005737">
    <property type="term" value="C:cytoplasm"/>
    <property type="evidence" value="ECO:0007669"/>
    <property type="project" value="UniProtKB-SubCell"/>
</dbReference>
<dbReference type="GO" id="GO:0003746">
    <property type="term" value="F:translation elongation factor activity"/>
    <property type="evidence" value="ECO:0007669"/>
    <property type="project" value="UniProtKB-UniRule"/>
</dbReference>
<dbReference type="CDD" id="cd14275">
    <property type="entry name" value="UBA_EF-Ts"/>
    <property type="match status" value="1"/>
</dbReference>
<dbReference type="FunFam" id="1.10.8.10:FF:000001">
    <property type="entry name" value="Elongation factor Ts"/>
    <property type="match status" value="1"/>
</dbReference>
<dbReference type="Gene3D" id="1.10.286.20">
    <property type="match status" value="1"/>
</dbReference>
<dbReference type="Gene3D" id="1.10.8.10">
    <property type="entry name" value="DNA helicase RuvA subunit, C-terminal domain"/>
    <property type="match status" value="1"/>
</dbReference>
<dbReference type="Gene3D" id="3.30.479.20">
    <property type="entry name" value="Elongation factor Ts, dimerisation domain"/>
    <property type="match status" value="2"/>
</dbReference>
<dbReference type="HAMAP" id="MF_00050">
    <property type="entry name" value="EF_Ts"/>
    <property type="match status" value="1"/>
</dbReference>
<dbReference type="InterPro" id="IPR036402">
    <property type="entry name" value="EF-Ts_dimer_sf"/>
</dbReference>
<dbReference type="InterPro" id="IPR001816">
    <property type="entry name" value="Transl_elong_EFTs/EF1B"/>
</dbReference>
<dbReference type="InterPro" id="IPR014039">
    <property type="entry name" value="Transl_elong_EFTs/EF1B_dimer"/>
</dbReference>
<dbReference type="InterPro" id="IPR018101">
    <property type="entry name" value="Transl_elong_Ts_CS"/>
</dbReference>
<dbReference type="InterPro" id="IPR009060">
    <property type="entry name" value="UBA-like_sf"/>
</dbReference>
<dbReference type="NCBIfam" id="TIGR00116">
    <property type="entry name" value="tsf"/>
    <property type="match status" value="1"/>
</dbReference>
<dbReference type="PANTHER" id="PTHR11741">
    <property type="entry name" value="ELONGATION FACTOR TS"/>
    <property type="match status" value="1"/>
</dbReference>
<dbReference type="PANTHER" id="PTHR11741:SF0">
    <property type="entry name" value="ELONGATION FACTOR TS, MITOCHONDRIAL"/>
    <property type="match status" value="1"/>
</dbReference>
<dbReference type="Pfam" id="PF00889">
    <property type="entry name" value="EF_TS"/>
    <property type="match status" value="1"/>
</dbReference>
<dbReference type="SUPFAM" id="SSF54713">
    <property type="entry name" value="Elongation factor Ts (EF-Ts), dimerisation domain"/>
    <property type="match status" value="2"/>
</dbReference>
<dbReference type="SUPFAM" id="SSF46934">
    <property type="entry name" value="UBA-like"/>
    <property type="match status" value="1"/>
</dbReference>
<dbReference type="PROSITE" id="PS01127">
    <property type="entry name" value="EF_TS_2"/>
    <property type="match status" value="1"/>
</dbReference>
<comment type="function">
    <text evidence="1">Associates with the EF-Tu.GDP complex and induces the exchange of GDP to GTP. It remains bound to the aminoacyl-tRNA.EF-Tu.GTP complex up to the GTP hydrolysis stage on the ribosome.</text>
</comment>
<comment type="subcellular location">
    <subcellularLocation>
        <location evidence="1">Cytoplasm</location>
    </subcellularLocation>
</comment>
<comment type="similarity">
    <text evidence="1">Belongs to the EF-Ts family.</text>
</comment>
<proteinExistence type="inferred from homology"/>
<sequence length="308" mass="32362">MAAITASMVAELRGKTDAPMMECKKALTEAGGDMAKAEELLRIKLGTKAGKAAARITAEGVVACHIDGTRGALIEVNSETDFVSKNDSFLQLARAAAELVARHQPADIAALGALAYEQDGFGPTLEDVRKGLIGKIGENMVLRRFRYFGAGHRLVSYLHGTRIGVVVEFDGDATVAKDVAMHIAAMKPVALSSAGVPAELIAAERSVAAAKAAEDKARAEAEGRPVQSDDIVAKRIEGAVHKYLKDVALFNQAFVKNDKQTVEQVLKAAGTTVKGFALYVVGEGMEKKVDDFAAEVAAQVAAAKAAVT</sequence>
<accession>A1WHU3</accession>
<keyword id="KW-0963">Cytoplasm</keyword>
<keyword id="KW-0251">Elongation factor</keyword>
<keyword id="KW-0648">Protein biosynthesis</keyword>
<keyword id="KW-1185">Reference proteome</keyword>
<reference key="1">
    <citation type="submission" date="2006-12" db="EMBL/GenBank/DDBJ databases">
        <title>Complete sequence of chromosome 1 of Verminephrobacter eiseniae EF01-2.</title>
        <authorList>
            <person name="Copeland A."/>
            <person name="Lucas S."/>
            <person name="Lapidus A."/>
            <person name="Barry K."/>
            <person name="Detter J.C."/>
            <person name="Glavina del Rio T."/>
            <person name="Dalin E."/>
            <person name="Tice H."/>
            <person name="Pitluck S."/>
            <person name="Chertkov O."/>
            <person name="Brettin T."/>
            <person name="Bruce D."/>
            <person name="Han C."/>
            <person name="Tapia R."/>
            <person name="Gilna P."/>
            <person name="Schmutz J."/>
            <person name="Larimer F."/>
            <person name="Land M."/>
            <person name="Hauser L."/>
            <person name="Kyrpides N."/>
            <person name="Kim E."/>
            <person name="Stahl D."/>
            <person name="Richardson P."/>
        </authorList>
    </citation>
    <scope>NUCLEOTIDE SEQUENCE [LARGE SCALE GENOMIC DNA]</scope>
    <source>
        <strain>EF01-2</strain>
    </source>
</reference>